<protein>
    <recommendedName>
        <fullName>E3 ubiquitin-protein ligase E3D</fullName>
        <ecNumber>2.3.2.26</ecNumber>
    </recommendedName>
    <alternativeName>
        <fullName evidence="2">HECT-type E3 ubiquitin transferase E3D</fullName>
    </alternativeName>
    <alternativeName>
        <fullName>UbcH10-binding protein with a HECT-like domain</fullName>
    </alternativeName>
    <alternativeName>
        <fullName>Ubiquitin-conjugating enzyme E2C-binding protein</fullName>
    </alternativeName>
</protein>
<reference key="1">
    <citation type="submission" date="2004-11" db="EMBL/GenBank/DDBJ databases">
        <authorList>
            <consortium name="The German cDNA consortium"/>
        </authorList>
    </citation>
    <scope>NUCLEOTIDE SEQUENCE [LARGE SCALE MRNA]</scope>
    <source>
        <tissue>Heart</tissue>
    </source>
</reference>
<proteinExistence type="evidence at transcript level"/>
<feature type="initiator methionine" description="Removed" evidence="1">
    <location>
        <position position="1"/>
    </location>
</feature>
<feature type="chain" id="PRO_0000311192" description="E3 ubiquitin-protein ligase E3D">
    <location>
        <begin position="2"/>
        <end position="389"/>
    </location>
</feature>
<feature type="region of interest" description="Interaction with UBE2C" evidence="1">
    <location>
        <begin position="235"/>
        <end position="257"/>
    </location>
</feature>
<feature type="region of interest" description="HECT-like" evidence="1">
    <location>
        <begin position="353"/>
        <end position="389"/>
    </location>
</feature>
<feature type="short sequence motif" description="BRAT1-like motif" evidence="1">
    <location>
        <begin position="129"/>
        <end position="159"/>
    </location>
</feature>
<feature type="binding site" evidence="1">
    <location>
        <position position="144"/>
    </location>
    <ligand>
        <name>Zn(2+)</name>
        <dbReference type="ChEBI" id="CHEBI:29105"/>
    </ligand>
</feature>
<feature type="modified residue" description="N-acetylalanine" evidence="1">
    <location>
        <position position="2"/>
    </location>
</feature>
<organism>
    <name type="scientific">Pongo abelii</name>
    <name type="common">Sumatran orangutan</name>
    <name type="synonym">Pongo pygmaeus abelii</name>
    <dbReference type="NCBI Taxonomy" id="9601"/>
    <lineage>
        <taxon>Eukaryota</taxon>
        <taxon>Metazoa</taxon>
        <taxon>Chordata</taxon>
        <taxon>Craniata</taxon>
        <taxon>Vertebrata</taxon>
        <taxon>Euteleostomi</taxon>
        <taxon>Mammalia</taxon>
        <taxon>Eutheria</taxon>
        <taxon>Euarchontoglires</taxon>
        <taxon>Primates</taxon>
        <taxon>Haplorrhini</taxon>
        <taxon>Catarrhini</taxon>
        <taxon>Hominidae</taxon>
        <taxon>Pongo</taxon>
    </lineage>
</organism>
<gene>
    <name type="primary">UBE3D</name>
    <name type="synonym">H10BH</name>
    <name type="synonym">UBE2CBP</name>
</gene>
<evidence type="ECO:0000250" key="1">
    <source>
        <dbReference type="UniProtKB" id="Q7Z6J8"/>
    </source>
</evidence>
<evidence type="ECO:0000305" key="2"/>
<accession>Q5RFG8</accession>
<name>UBE3D_PONAB</name>
<dbReference type="EC" id="2.3.2.26"/>
<dbReference type="EMBL" id="CR857190">
    <property type="protein sequence ID" value="CAH89489.1"/>
    <property type="molecule type" value="mRNA"/>
</dbReference>
<dbReference type="RefSeq" id="NP_001124642.1">
    <property type="nucleotide sequence ID" value="NM_001131170.2"/>
</dbReference>
<dbReference type="FunCoup" id="Q5RFG8">
    <property type="interactions" value="1442"/>
</dbReference>
<dbReference type="STRING" id="9601.ENSPPYP00000018809"/>
<dbReference type="GeneID" id="100171483"/>
<dbReference type="KEGG" id="pon:100171483"/>
<dbReference type="CTD" id="90025"/>
<dbReference type="eggNOG" id="KOG4784">
    <property type="taxonomic scope" value="Eukaryota"/>
</dbReference>
<dbReference type="InParanoid" id="Q5RFG8"/>
<dbReference type="OrthoDB" id="66510at2759"/>
<dbReference type="UniPathway" id="UPA00143"/>
<dbReference type="Proteomes" id="UP000001595">
    <property type="component" value="Unplaced"/>
</dbReference>
<dbReference type="GO" id="GO:0005829">
    <property type="term" value="C:cytosol"/>
    <property type="evidence" value="ECO:0007669"/>
    <property type="project" value="TreeGrafter"/>
</dbReference>
<dbReference type="GO" id="GO:0005634">
    <property type="term" value="C:nucleus"/>
    <property type="evidence" value="ECO:0007669"/>
    <property type="project" value="TreeGrafter"/>
</dbReference>
<dbReference type="GO" id="GO:0000151">
    <property type="term" value="C:ubiquitin ligase complex"/>
    <property type="evidence" value="ECO:0007669"/>
    <property type="project" value="TreeGrafter"/>
</dbReference>
<dbReference type="GO" id="GO:0030332">
    <property type="term" value="F:cyclin binding"/>
    <property type="evidence" value="ECO:0007669"/>
    <property type="project" value="TreeGrafter"/>
</dbReference>
<dbReference type="GO" id="GO:0031624">
    <property type="term" value="F:ubiquitin conjugating enzyme binding"/>
    <property type="evidence" value="ECO:0007669"/>
    <property type="project" value="TreeGrafter"/>
</dbReference>
<dbReference type="GO" id="GO:0061630">
    <property type="term" value="F:ubiquitin protein ligase activity"/>
    <property type="evidence" value="ECO:0007669"/>
    <property type="project" value="TreeGrafter"/>
</dbReference>
<dbReference type="GO" id="GO:0043161">
    <property type="term" value="P:proteasome-mediated ubiquitin-dependent protein catabolic process"/>
    <property type="evidence" value="ECO:0007669"/>
    <property type="project" value="TreeGrafter"/>
</dbReference>
<dbReference type="GO" id="GO:0051865">
    <property type="term" value="P:protein autoubiquitination"/>
    <property type="evidence" value="ECO:0007669"/>
    <property type="project" value="TreeGrafter"/>
</dbReference>
<dbReference type="GO" id="GO:0006513">
    <property type="term" value="P:protein monoubiquitination"/>
    <property type="evidence" value="ECO:0007669"/>
    <property type="project" value="TreeGrafter"/>
</dbReference>
<dbReference type="GO" id="GO:0000209">
    <property type="term" value="P:protein polyubiquitination"/>
    <property type="evidence" value="ECO:0007669"/>
    <property type="project" value="TreeGrafter"/>
</dbReference>
<dbReference type="InterPro" id="IPR019193">
    <property type="entry name" value="UBQ-conj_enz_E2-bd_prot"/>
</dbReference>
<dbReference type="PANTHER" id="PTHR31531:SF2">
    <property type="entry name" value="E3 UBIQUITIN-PROTEIN LIGASE E3D"/>
    <property type="match status" value="1"/>
</dbReference>
<dbReference type="PANTHER" id="PTHR31531">
    <property type="entry name" value="E3 UBIQUITIN-PROTEIN LIGASE E3D FAMILY MEMBER"/>
    <property type="match status" value="1"/>
</dbReference>
<dbReference type="Pfam" id="PF09814">
    <property type="entry name" value="HECT_2"/>
    <property type="match status" value="1"/>
</dbReference>
<keyword id="KW-0007">Acetylation</keyword>
<keyword id="KW-0963">Cytoplasm</keyword>
<keyword id="KW-0479">Metal-binding</keyword>
<keyword id="KW-1185">Reference proteome</keyword>
<keyword id="KW-0808">Transferase</keyword>
<keyword id="KW-0832">Ubl conjugation</keyword>
<keyword id="KW-0833">Ubl conjugation pathway</keyword>
<keyword id="KW-0862">Zinc</keyword>
<comment type="function">
    <text evidence="1">E3 ubiquitin-protein ligase which accepts ubiquitin from specific E2 ubiquitin-conjugating enzymes, and transfers it to substrates, generally promoting their degradation by the proteasome. Independently of its E3 ubiquitin-protein ligase activity, acts as an inhibitor of CPSF3 endonuclease activity by blocking CPSF3 active site.</text>
</comment>
<comment type="catalytic activity">
    <reaction evidence="1">
        <text>S-ubiquitinyl-[E2 ubiquitin-conjugating enzyme]-L-cysteine + [acceptor protein]-L-lysine = [E2 ubiquitin-conjugating enzyme]-L-cysteine + N(6)-ubiquitinyl-[acceptor protein]-L-lysine.</text>
        <dbReference type="EC" id="2.3.2.26"/>
    </reaction>
</comment>
<comment type="pathway">
    <text evidence="1">Protein modification; protein ubiquitination.</text>
</comment>
<comment type="subunit">
    <text evidence="1">Interacts with UBE2C/UbcH10 (E2 ubiquitin-conjugating enzyme). In vitro, interacts with cyclin-B.</text>
</comment>
<comment type="subcellular location">
    <subcellularLocation>
        <location evidence="1">Cytoplasm</location>
    </subcellularLocation>
</comment>
<comment type="domain">
    <text evidence="1">The C-terminal half (AA 188-389) is able to bind cyclin-B and shows a self-ubiquitination activity (mono-, poly, or multi-ubiquitination) in a HECT-like sequence dependent manner.</text>
</comment>
<comment type="domain">
    <text evidence="1">The BRAT1-like motif mediates inhibition of the endonuclease activity of CPSF3 by forming hyrogen bond and hydrophobic interactions with the active site of CPSF3: Cys-144 coordinates one of the two active site zinc ions of CPSF3.</text>
</comment>
<comment type="PTM">
    <text evidence="1">Ubiquitinated by UBCH10 (E2 ubiquitin-conjugating enzyme).</text>
</comment>
<sequence length="389" mass="43595">MAATTAETRVFLEVRGQLQSALLILGEPKEGGMPMNISIMPSSLQMKTPEGCTEIQLPAEVRLVPSSCRGLQFVAGDGLHLRLQAHAELGTKLISMFNQSLQAQECCTFYCQSCGEVIINDRKLLRVLPLPSENWGALVGEWCCHPDPFANKPLHPQENDCFIGDSFFLVNLRTSLWQQRPELSPVEMCCVSSDNHCKLEPKANTKVICKRCKVMLGETVSSETTKFYMTEIIIQSSERSFPIIPRPRFVQSVIAQCLVQLSSARSTFRFMIQGQDDKVYILLWLLNSDSLVIESLRNSKYIKKFPLLEDTLKADSSSAWSAVKVLYQPCIKSRNEKLISSWESDISVHSLTLPSATCLELLLILSKSNANLPSSLRHMNSFQVAFLKI</sequence>